<evidence type="ECO:0000255" key="1">
    <source>
        <dbReference type="HAMAP-Rule" id="MF_01070"/>
    </source>
</evidence>
<proteinExistence type="inferred from homology"/>
<name>OPGB_SALHS</name>
<gene>
    <name evidence="1" type="primary">mdoB</name>
    <name evidence="1" type="synonym">opgB</name>
    <name type="ordered locus">SeHA_C4949</name>
</gene>
<keyword id="KW-0997">Cell inner membrane</keyword>
<keyword id="KW-1003">Cell membrane</keyword>
<keyword id="KW-0472">Membrane</keyword>
<keyword id="KW-0808">Transferase</keyword>
<keyword id="KW-0812">Transmembrane</keyword>
<keyword id="KW-1133">Transmembrane helix</keyword>
<dbReference type="EC" id="2.7.8.20" evidence="1"/>
<dbReference type="EMBL" id="CP001120">
    <property type="protein sequence ID" value="ACF70065.1"/>
    <property type="molecule type" value="Genomic_DNA"/>
</dbReference>
<dbReference type="RefSeq" id="WP_001292726.1">
    <property type="nucleotide sequence ID" value="NC_011083.1"/>
</dbReference>
<dbReference type="SMR" id="B4TGX6"/>
<dbReference type="KEGG" id="seh:SeHA_C4949"/>
<dbReference type="HOGENOM" id="CLU_023986_1_0_6"/>
<dbReference type="UniPathway" id="UPA00637"/>
<dbReference type="Proteomes" id="UP000001866">
    <property type="component" value="Chromosome"/>
</dbReference>
<dbReference type="GO" id="GO:0005886">
    <property type="term" value="C:plasma membrane"/>
    <property type="evidence" value="ECO:0007669"/>
    <property type="project" value="UniProtKB-SubCell"/>
</dbReference>
<dbReference type="GO" id="GO:0008960">
    <property type="term" value="F:phosphatidylglycerol-membrane-oligosaccharide glycerophosphotransferase activity"/>
    <property type="evidence" value="ECO:0007669"/>
    <property type="project" value="UniProtKB-UniRule"/>
</dbReference>
<dbReference type="GO" id="GO:0009250">
    <property type="term" value="P:glucan biosynthetic process"/>
    <property type="evidence" value="ECO:0007669"/>
    <property type="project" value="UniProtKB-UniRule"/>
</dbReference>
<dbReference type="CDD" id="cd16015">
    <property type="entry name" value="LTA_synthase"/>
    <property type="match status" value="1"/>
</dbReference>
<dbReference type="FunFam" id="3.40.720.10:FF:000009">
    <property type="entry name" value="Phosphoglycerol transferase I"/>
    <property type="match status" value="1"/>
</dbReference>
<dbReference type="Gene3D" id="3.40.720.10">
    <property type="entry name" value="Alkaline Phosphatase, subunit A"/>
    <property type="match status" value="1"/>
</dbReference>
<dbReference type="HAMAP" id="MF_01070">
    <property type="entry name" value="MdoB_OpgB"/>
    <property type="match status" value="1"/>
</dbReference>
<dbReference type="InterPro" id="IPR017850">
    <property type="entry name" value="Alkaline_phosphatase_core_sf"/>
</dbReference>
<dbReference type="InterPro" id="IPR054288">
    <property type="entry name" value="DUF7024"/>
</dbReference>
<dbReference type="InterPro" id="IPR020881">
    <property type="entry name" value="OpgB"/>
</dbReference>
<dbReference type="InterPro" id="IPR050448">
    <property type="entry name" value="OpgB/LTA_synthase_biosynth"/>
</dbReference>
<dbReference type="InterPro" id="IPR000917">
    <property type="entry name" value="Sulfatase_N"/>
</dbReference>
<dbReference type="NCBIfam" id="NF003000">
    <property type="entry name" value="PRK03776.1"/>
    <property type="match status" value="1"/>
</dbReference>
<dbReference type="PANTHER" id="PTHR47371">
    <property type="entry name" value="LIPOTEICHOIC ACID SYNTHASE"/>
    <property type="match status" value="1"/>
</dbReference>
<dbReference type="PANTHER" id="PTHR47371:SF3">
    <property type="entry name" value="PHOSPHOGLYCEROL TRANSFERASE I"/>
    <property type="match status" value="1"/>
</dbReference>
<dbReference type="Pfam" id="PF22895">
    <property type="entry name" value="DUF7024"/>
    <property type="match status" value="1"/>
</dbReference>
<dbReference type="Pfam" id="PF00884">
    <property type="entry name" value="Sulfatase"/>
    <property type="match status" value="1"/>
</dbReference>
<dbReference type="SUPFAM" id="SSF53649">
    <property type="entry name" value="Alkaline phosphatase-like"/>
    <property type="match status" value="1"/>
</dbReference>
<accession>B4TGX6</accession>
<comment type="function">
    <text evidence="1">Transfers a phosphoglycerol residue from phosphatidylglycerol to the membrane-bound nascent glucan backbones.</text>
</comment>
<comment type="catalytic activity">
    <reaction evidence="1">
        <text>a phosphatidylglycerol + a membrane-derived-oligosaccharide D-glucose = a 1,2-diacyl-sn-glycerol + a membrane-derived-oligosaccharide 6-(glycerophospho)-D-glucose.</text>
        <dbReference type="EC" id="2.7.8.20"/>
    </reaction>
</comment>
<comment type="pathway">
    <text evidence="1">Glycan metabolism; osmoregulated periplasmic glucan (OPG) biosynthesis.</text>
</comment>
<comment type="subcellular location">
    <subcellularLocation>
        <location evidence="1">Cell inner membrane</location>
        <topology evidence="1">Multi-pass membrane protein</topology>
    </subcellularLocation>
</comment>
<comment type="similarity">
    <text evidence="1">Belongs to the OpgB family.</text>
</comment>
<feature type="chain" id="PRO_1000136630" description="Phosphoglycerol transferase I">
    <location>
        <begin position="1"/>
        <end position="763"/>
    </location>
</feature>
<feature type="transmembrane region" description="Helical" evidence="1">
    <location>
        <begin position="1"/>
        <end position="21"/>
    </location>
</feature>
<feature type="transmembrane region" description="Helical" evidence="1">
    <location>
        <begin position="26"/>
        <end position="46"/>
    </location>
</feature>
<feature type="transmembrane region" description="Helical" evidence="1">
    <location>
        <begin position="77"/>
        <end position="97"/>
    </location>
</feature>
<feature type="transmembrane region" description="Helical" evidence="1">
    <location>
        <begin position="108"/>
        <end position="128"/>
    </location>
</feature>
<sequence length="763" mass="85077">MSELLSVALFLASVLIYAWKAGRNTWWFAATLTVLGLFVILNITLYASDYFTGDGINDAVLYTLTNSLTGAGVGKYILPGIGIALALVAVFGALGWVLRRRRHHPHHVGYSLLALLLALGSVDASPAFRQITELVKSQMRDGDPDFAVYYKEPAKTIPNPKLNLVYIYGESLERTYFDNDAFPNLTPELGALKNEGLDFSHTMQLPGTDYTIAGMVASQCGIPLFAPFEGNASASVSSFFPQNICLGDILKNSGYQNYFVQGANLRFAGKDVFLKSHGFDHLYGAEELKTVVADPSYRNDWGFYDDTVLDEAWKKFEALSRSGQRFSLFTLTVDTHHPDGFISRTCNRKRYDYDGKPNQSFSAVSCSQENIAEFINKIKASPWFKDTVIVVSSDHLAMNNTAWKYLNKQDRNNLFFILRGDKPQQETLAVKRNTMDNGATVLDILGGDNFIGLGRSSLSGQSLSEVFLNVKEKVLAMKPDIIRLWNFPKEIKDFTVDRDKNMIAFSGSHFRLPLLLRVSDKRVEPLPESEYSAPLRFQLADFAPRDNFVWIDRCYKMAQLWAPALALSTDWCVSQGQLGGQQTVQHVDKAQWQGKTAFKDTMIDMERYKGNVDTLKIVDNDIRYKADSFIFNVAGAPEEVKQFSGISRPESWGRWSNAQLGDEVKIEYKAPLPKKFDLVITAKAFGDNANRPIPVRVGNEEQTLVLGHDVSTITLHFNNPTDANTLVIAPPAPVSTNEGNILGHSPRKLGIGMVEIKVVNVES</sequence>
<reference key="1">
    <citation type="journal article" date="2011" name="J. Bacteriol.">
        <title>Comparative genomics of 28 Salmonella enterica isolates: evidence for CRISPR-mediated adaptive sublineage evolution.</title>
        <authorList>
            <person name="Fricke W.F."/>
            <person name="Mammel M.K."/>
            <person name="McDermott P.F."/>
            <person name="Tartera C."/>
            <person name="White D.G."/>
            <person name="Leclerc J.E."/>
            <person name="Ravel J."/>
            <person name="Cebula T.A."/>
        </authorList>
    </citation>
    <scope>NUCLEOTIDE SEQUENCE [LARGE SCALE GENOMIC DNA]</scope>
    <source>
        <strain>SL476</strain>
    </source>
</reference>
<protein>
    <recommendedName>
        <fullName evidence="1">Phosphoglycerol transferase I</fullName>
        <ecNumber evidence="1">2.7.8.20</ecNumber>
    </recommendedName>
    <alternativeName>
        <fullName evidence="1">Phosphatidylglycerol--membrane-oligosaccharide glycerophosphotransferase</fullName>
    </alternativeName>
</protein>
<organism>
    <name type="scientific">Salmonella heidelberg (strain SL476)</name>
    <dbReference type="NCBI Taxonomy" id="454169"/>
    <lineage>
        <taxon>Bacteria</taxon>
        <taxon>Pseudomonadati</taxon>
        <taxon>Pseudomonadota</taxon>
        <taxon>Gammaproteobacteria</taxon>
        <taxon>Enterobacterales</taxon>
        <taxon>Enterobacteriaceae</taxon>
        <taxon>Salmonella</taxon>
    </lineage>
</organism>